<gene>
    <name evidence="1" type="primary">dapA</name>
    <name type="ordered locus">Msp_0108</name>
</gene>
<reference key="1">
    <citation type="journal article" date="2006" name="J. Bacteriol.">
        <title>The genome sequence of Methanosphaera stadtmanae reveals why this human intestinal archaeon is restricted to methanol and H2 for methane formation and ATP synthesis.</title>
        <authorList>
            <person name="Fricke W.F."/>
            <person name="Seedorf H."/>
            <person name="Henne A."/>
            <person name="Kruer M."/>
            <person name="Liesegang H."/>
            <person name="Hedderich R."/>
            <person name="Gottschalk G."/>
            <person name="Thauer R.K."/>
        </authorList>
    </citation>
    <scope>NUCLEOTIDE SEQUENCE [LARGE SCALE GENOMIC DNA]</scope>
    <source>
        <strain>ATCC 43021 / DSM 3091 / JCM 11832 / MCB-3</strain>
    </source>
</reference>
<comment type="function">
    <text evidence="1">Catalyzes the condensation of (S)-aspartate-beta-semialdehyde [(S)-ASA] and pyruvate to 4-hydroxy-tetrahydrodipicolinate (HTPA).</text>
</comment>
<comment type="catalytic activity">
    <reaction evidence="1">
        <text>L-aspartate 4-semialdehyde + pyruvate = (2S,4S)-4-hydroxy-2,3,4,5-tetrahydrodipicolinate + H2O + H(+)</text>
        <dbReference type="Rhea" id="RHEA:34171"/>
        <dbReference type="ChEBI" id="CHEBI:15361"/>
        <dbReference type="ChEBI" id="CHEBI:15377"/>
        <dbReference type="ChEBI" id="CHEBI:15378"/>
        <dbReference type="ChEBI" id="CHEBI:67139"/>
        <dbReference type="ChEBI" id="CHEBI:537519"/>
        <dbReference type="EC" id="4.3.3.7"/>
    </reaction>
</comment>
<comment type="pathway">
    <text evidence="1">Amino-acid biosynthesis; L-lysine biosynthesis via DAP pathway; (S)-tetrahydrodipicolinate from L-aspartate: step 3/4.</text>
</comment>
<comment type="subunit">
    <text evidence="1">Homotetramer; dimer of dimers.</text>
</comment>
<comment type="subcellular location">
    <subcellularLocation>
        <location evidence="1">Cytoplasm</location>
    </subcellularLocation>
</comment>
<comment type="similarity">
    <text evidence="1">Belongs to the DapA family.</text>
</comment>
<comment type="caution">
    <text evidence="2">Was originally thought to be a dihydrodipicolinate synthase (DHDPS), catalyzing the condensation of (S)-aspartate-beta-semialdehyde [(S)-ASA] and pyruvate to dihydrodipicolinate (DHDP). However, it was shown in E.coli that the product of the enzymatic reaction is not dihydrodipicolinate but in fact (4S)-4-hydroxy-2,3,4,5-tetrahydro-(2S)-dipicolinic acid (HTPA), and that the consecutive dehydration reaction leading to DHDP is not spontaneous but catalyzed by DapB.</text>
</comment>
<keyword id="KW-0028">Amino-acid biosynthesis</keyword>
<keyword id="KW-0963">Cytoplasm</keyword>
<keyword id="KW-0220">Diaminopimelate biosynthesis</keyword>
<keyword id="KW-0456">Lyase</keyword>
<keyword id="KW-0457">Lysine biosynthesis</keyword>
<keyword id="KW-1185">Reference proteome</keyword>
<keyword id="KW-0704">Schiff base</keyword>
<evidence type="ECO:0000255" key="1">
    <source>
        <dbReference type="HAMAP-Rule" id="MF_00418"/>
    </source>
</evidence>
<evidence type="ECO:0000305" key="2"/>
<protein>
    <recommendedName>
        <fullName evidence="1">4-hydroxy-tetrahydrodipicolinate synthase</fullName>
        <shortName evidence="1">HTPA synthase</shortName>
        <ecNumber evidence="1">4.3.3.7</ecNumber>
    </recommendedName>
</protein>
<feature type="chain" id="PRO_1000050223" description="4-hydroxy-tetrahydrodipicolinate synthase">
    <location>
        <begin position="1"/>
        <end position="297"/>
    </location>
</feature>
<feature type="active site" description="Proton donor/acceptor" evidence="1">
    <location>
        <position position="134"/>
    </location>
</feature>
<feature type="active site" description="Schiff-base intermediate with substrate" evidence="1">
    <location>
        <position position="162"/>
    </location>
</feature>
<feature type="binding site" evidence="1">
    <location>
        <position position="46"/>
    </location>
    <ligand>
        <name>pyruvate</name>
        <dbReference type="ChEBI" id="CHEBI:15361"/>
    </ligand>
</feature>
<feature type="binding site" evidence="1">
    <location>
        <position position="209"/>
    </location>
    <ligand>
        <name>pyruvate</name>
        <dbReference type="ChEBI" id="CHEBI:15361"/>
    </ligand>
</feature>
<feature type="site" description="Part of a proton relay during catalysis" evidence="1">
    <location>
        <position position="45"/>
    </location>
</feature>
<feature type="site" description="Part of a proton relay during catalysis" evidence="1">
    <location>
        <position position="108"/>
    </location>
</feature>
<accession>Q2NHW2</accession>
<proteinExistence type="inferred from homology"/>
<organism>
    <name type="scientific">Methanosphaera stadtmanae (strain ATCC 43021 / DSM 3091 / JCM 11832 / MCB-3)</name>
    <dbReference type="NCBI Taxonomy" id="339860"/>
    <lineage>
        <taxon>Archaea</taxon>
        <taxon>Methanobacteriati</taxon>
        <taxon>Methanobacteriota</taxon>
        <taxon>Methanomada group</taxon>
        <taxon>Methanobacteria</taxon>
        <taxon>Methanobacteriales</taxon>
        <taxon>Methanobacteriaceae</taxon>
        <taxon>Methanosphaera</taxon>
    </lineage>
</organism>
<sequence>MNLEGTHVAMITPFNNDNTINEEKYREFIDFLIEGGVDGILAAGTTGESATLTLEEHQKVIDIMVDQANGRVTTIAGAGSNATSEALDLVNYSKDAGADVALVITPYYNKPQQSGLYNHFKLLNDQCDMPIIAYNVPSRTGVDLSVDNIINLAKLDNIVAIKEANPDLNKLAHVFSRLNSENLLDDFTVLSGNDSLTLPMISQGSKGVISVVANIMPNKTSTMVNNALNGNYDEARTLSNELFNLMDVLFIEASPAPTKRALNLMGMDVGGLRMPINEICDENEVILKEILKENNLI</sequence>
<dbReference type="EC" id="4.3.3.7" evidence="1"/>
<dbReference type="EMBL" id="CP000102">
    <property type="protein sequence ID" value="ABC56527.1"/>
    <property type="molecule type" value="Genomic_DNA"/>
</dbReference>
<dbReference type="RefSeq" id="WP_011405726.1">
    <property type="nucleotide sequence ID" value="NC_007681.1"/>
</dbReference>
<dbReference type="SMR" id="Q2NHW2"/>
<dbReference type="STRING" id="339860.Msp_0108"/>
<dbReference type="GeneID" id="41324680"/>
<dbReference type="KEGG" id="mst:Msp_0108"/>
<dbReference type="eggNOG" id="arCOG04172">
    <property type="taxonomic scope" value="Archaea"/>
</dbReference>
<dbReference type="HOGENOM" id="CLU_049343_7_1_2"/>
<dbReference type="OrthoDB" id="33636at2157"/>
<dbReference type="UniPathway" id="UPA00034">
    <property type="reaction ID" value="UER00017"/>
</dbReference>
<dbReference type="Proteomes" id="UP000001931">
    <property type="component" value="Chromosome"/>
</dbReference>
<dbReference type="GO" id="GO:0005737">
    <property type="term" value="C:cytoplasm"/>
    <property type="evidence" value="ECO:0007669"/>
    <property type="project" value="UniProtKB-SubCell"/>
</dbReference>
<dbReference type="GO" id="GO:0008675">
    <property type="term" value="F:2-dehydro-3-deoxy-phosphogluconate aldolase activity"/>
    <property type="evidence" value="ECO:0007669"/>
    <property type="project" value="UniProtKB-ARBA"/>
</dbReference>
<dbReference type="GO" id="GO:0008840">
    <property type="term" value="F:4-hydroxy-tetrahydrodipicolinate synthase activity"/>
    <property type="evidence" value="ECO:0007669"/>
    <property type="project" value="UniProtKB-UniRule"/>
</dbReference>
<dbReference type="GO" id="GO:0019877">
    <property type="term" value="P:diaminopimelate biosynthetic process"/>
    <property type="evidence" value="ECO:0007669"/>
    <property type="project" value="UniProtKB-UniRule"/>
</dbReference>
<dbReference type="GO" id="GO:0009089">
    <property type="term" value="P:lysine biosynthetic process via diaminopimelate"/>
    <property type="evidence" value="ECO:0007669"/>
    <property type="project" value="UniProtKB-UniRule"/>
</dbReference>
<dbReference type="CDD" id="cd00950">
    <property type="entry name" value="DHDPS"/>
    <property type="match status" value="1"/>
</dbReference>
<dbReference type="Gene3D" id="3.20.20.70">
    <property type="entry name" value="Aldolase class I"/>
    <property type="match status" value="1"/>
</dbReference>
<dbReference type="HAMAP" id="MF_00418">
    <property type="entry name" value="DapA"/>
    <property type="match status" value="1"/>
</dbReference>
<dbReference type="InterPro" id="IPR013785">
    <property type="entry name" value="Aldolase_TIM"/>
</dbReference>
<dbReference type="InterPro" id="IPR005263">
    <property type="entry name" value="DapA"/>
</dbReference>
<dbReference type="InterPro" id="IPR002220">
    <property type="entry name" value="DapA-like"/>
</dbReference>
<dbReference type="InterPro" id="IPR020625">
    <property type="entry name" value="Schiff_base-form_aldolases_AS"/>
</dbReference>
<dbReference type="InterPro" id="IPR020624">
    <property type="entry name" value="Schiff_base-form_aldolases_CS"/>
</dbReference>
<dbReference type="NCBIfam" id="TIGR00674">
    <property type="entry name" value="dapA"/>
    <property type="match status" value="1"/>
</dbReference>
<dbReference type="PANTHER" id="PTHR12128:SF66">
    <property type="entry name" value="4-HYDROXY-2-OXOGLUTARATE ALDOLASE, MITOCHONDRIAL"/>
    <property type="match status" value="1"/>
</dbReference>
<dbReference type="PANTHER" id="PTHR12128">
    <property type="entry name" value="DIHYDRODIPICOLINATE SYNTHASE"/>
    <property type="match status" value="1"/>
</dbReference>
<dbReference type="Pfam" id="PF00701">
    <property type="entry name" value="DHDPS"/>
    <property type="match status" value="1"/>
</dbReference>
<dbReference type="PIRSF" id="PIRSF001365">
    <property type="entry name" value="DHDPS"/>
    <property type="match status" value="1"/>
</dbReference>
<dbReference type="PRINTS" id="PR00146">
    <property type="entry name" value="DHPICSNTHASE"/>
</dbReference>
<dbReference type="SMART" id="SM01130">
    <property type="entry name" value="DHDPS"/>
    <property type="match status" value="1"/>
</dbReference>
<dbReference type="SUPFAM" id="SSF51569">
    <property type="entry name" value="Aldolase"/>
    <property type="match status" value="1"/>
</dbReference>
<dbReference type="PROSITE" id="PS00665">
    <property type="entry name" value="DHDPS_1"/>
    <property type="match status" value="1"/>
</dbReference>
<dbReference type="PROSITE" id="PS00666">
    <property type="entry name" value="DHDPS_2"/>
    <property type="match status" value="1"/>
</dbReference>
<name>DAPA_METST</name>